<feature type="chain" id="PRO_0000154111" description="Anthranilate synthase component 1">
    <location>
        <begin position="1"/>
        <end position="519"/>
    </location>
</feature>
<feature type="binding site" evidence="2 5">
    <location>
        <position position="39"/>
    </location>
    <ligand>
        <name>L-tryptophan</name>
        <dbReference type="ChEBI" id="CHEBI:57912"/>
    </ligand>
</feature>
<feature type="binding site" evidence="2 5">
    <location>
        <begin position="290"/>
        <end position="292"/>
    </location>
    <ligand>
        <name>L-tryptophan</name>
        <dbReference type="ChEBI" id="CHEBI:57912"/>
    </ligand>
</feature>
<feature type="binding site" evidence="4">
    <location>
        <begin position="327"/>
        <end position="328"/>
    </location>
    <ligand>
        <name>chorismate</name>
        <dbReference type="ChEBI" id="CHEBI:29748"/>
    </ligand>
</feature>
<feature type="binding site" evidence="2">
    <location>
        <position position="360"/>
    </location>
    <ligand>
        <name>Mg(2+)</name>
        <dbReference type="ChEBI" id="CHEBI:18420"/>
    </ligand>
</feature>
<feature type="binding site" evidence="4">
    <location>
        <position position="448"/>
    </location>
    <ligand>
        <name>chorismate</name>
        <dbReference type="ChEBI" id="CHEBI:29748"/>
    </ligand>
</feature>
<feature type="binding site" evidence="4">
    <location>
        <position position="468"/>
    </location>
    <ligand>
        <name>chorismate</name>
        <dbReference type="ChEBI" id="CHEBI:29748"/>
    </ligand>
</feature>
<feature type="binding site" evidence="4">
    <location>
        <begin position="482"/>
        <end position="484"/>
    </location>
    <ligand>
        <name>chorismate</name>
        <dbReference type="ChEBI" id="CHEBI:29748"/>
    </ligand>
</feature>
<feature type="binding site" evidence="4">
    <location>
        <position position="484"/>
    </location>
    <ligand>
        <name>chorismate</name>
        <dbReference type="ChEBI" id="CHEBI:29748"/>
    </ligand>
</feature>
<feature type="binding site" evidence="2">
    <location>
        <position position="497"/>
    </location>
    <ligand>
        <name>Mg(2+)</name>
        <dbReference type="ChEBI" id="CHEBI:18420"/>
    </ligand>
</feature>
<feature type="sequence conflict" description="In Ref. 4; AAA57308." evidence="3" ref="4">
    <original>ARA</original>
    <variation>PVP</variation>
    <location>
        <begin position="502"/>
        <end position="504"/>
    </location>
</feature>
<feature type="strand" evidence="6">
    <location>
        <begin position="8"/>
        <end position="14"/>
    </location>
</feature>
<feature type="helix" evidence="6">
    <location>
        <begin position="20"/>
        <end position="28"/>
    </location>
</feature>
<feature type="strand" evidence="6">
    <location>
        <begin position="32"/>
        <end position="40"/>
    </location>
</feature>
<feature type="turn" evidence="6">
    <location>
        <begin position="42"/>
        <end position="44"/>
    </location>
</feature>
<feature type="strand" evidence="6">
    <location>
        <begin position="47"/>
        <end position="63"/>
    </location>
</feature>
<feature type="strand" evidence="6">
    <location>
        <begin position="66"/>
        <end position="71"/>
    </location>
</feature>
<feature type="helix" evidence="6">
    <location>
        <begin position="76"/>
        <end position="78"/>
    </location>
</feature>
<feature type="helix" evidence="6">
    <location>
        <begin position="79"/>
        <end position="86"/>
    </location>
</feature>
<feature type="strand" evidence="6">
    <location>
        <begin position="91"/>
        <end position="96"/>
    </location>
</feature>
<feature type="strand" evidence="6">
    <location>
        <begin position="99"/>
        <end position="103"/>
    </location>
</feature>
<feature type="strand" evidence="6">
    <location>
        <begin position="109"/>
        <end position="111"/>
    </location>
</feature>
<feature type="helix" evidence="6">
    <location>
        <begin position="113"/>
        <end position="117"/>
    </location>
</feature>
<feature type="helix" evidence="6">
    <location>
        <begin position="123"/>
        <end position="130"/>
    </location>
</feature>
<feature type="strand" evidence="6">
    <location>
        <begin position="132"/>
        <end position="134"/>
    </location>
</feature>
<feature type="strand" evidence="6">
    <location>
        <begin position="142"/>
        <end position="149"/>
    </location>
</feature>
<feature type="helix" evidence="6">
    <location>
        <begin position="151"/>
        <end position="156"/>
    </location>
</feature>
<feature type="strand" evidence="6">
    <location>
        <begin position="171"/>
        <end position="184"/>
    </location>
</feature>
<feature type="turn" evidence="6">
    <location>
        <begin position="185"/>
        <end position="188"/>
    </location>
</feature>
<feature type="strand" evidence="6">
    <location>
        <begin position="189"/>
        <end position="196"/>
    </location>
</feature>
<feature type="helix" evidence="6">
    <location>
        <begin position="201"/>
        <end position="218"/>
    </location>
</feature>
<feature type="strand" evidence="6">
    <location>
        <begin position="236"/>
        <end position="239"/>
    </location>
</feature>
<feature type="helix" evidence="6">
    <location>
        <begin position="241"/>
        <end position="256"/>
    </location>
</feature>
<feature type="strand" evidence="6">
    <location>
        <begin position="261"/>
        <end position="263"/>
    </location>
</feature>
<feature type="strand" evidence="6">
    <location>
        <begin position="266"/>
        <end position="272"/>
    </location>
</feature>
<feature type="helix" evidence="6">
    <location>
        <begin position="277"/>
        <end position="286"/>
    </location>
</feature>
<feature type="strand" evidence="6">
    <location>
        <begin position="290"/>
        <end position="296"/>
    </location>
</feature>
<feature type="strand" evidence="6">
    <location>
        <begin position="301"/>
        <end position="307"/>
    </location>
</feature>
<feature type="strand" evidence="6">
    <location>
        <begin position="309"/>
        <end position="314"/>
    </location>
</feature>
<feature type="turn" evidence="6">
    <location>
        <begin position="315"/>
        <end position="318"/>
    </location>
</feature>
<feature type="strand" evidence="6">
    <location>
        <begin position="319"/>
        <end position="322"/>
    </location>
</feature>
<feature type="strand" evidence="6">
    <location>
        <begin position="325"/>
        <end position="329"/>
    </location>
</feature>
<feature type="helix" evidence="6">
    <location>
        <begin position="341"/>
        <end position="353"/>
    </location>
</feature>
<feature type="helix" evidence="6">
    <location>
        <begin position="355"/>
        <end position="375"/>
    </location>
</feature>
<feature type="turn" evidence="6">
    <location>
        <begin position="378"/>
        <end position="380"/>
    </location>
</feature>
<feature type="strand" evidence="6">
    <location>
        <begin position="382"/>
        <end position="391"/>
    </location>
</feature>
<feature type="strand" evidence="6">
    <location>
        <begin position="396"/>
        <end position="406"/>
    </location>
</feature>
<feature type="helix" evidence="6">
    <location>
        <begin position="412"/>
        <end position="419"/>
    </location>
</feature>
<feature type="helix" evidence="6">
    <location>
        <begin position="423"/>
        <end position="425"/>
    </location>
</feature>
<feature type="strand" evidence="6">
    <location>
        <begin position="426"/>
        <end position="429"/>
    </location>
</feature>
<feature type="helix" evidence="6">
    <location>
        <begin position="430"/>
        <end position="441"/>
    </location>
</feature>
<feature type="turn" evidence="6">
    <location>
        <begin position="446"/>
        <end position="449"/>
    </location>
</feature>
<feature type="strand" evidence="6">
    <location>
        <begin position="450"/>
        <end position="456"/>
    </location>
</feature>
<feature type="strand" evidence="6">
    <location>
        <begin position="461"/>
        <end position="465"/>
    </location>
</feature>
<feature type="strand" evidence="6">
    <location>
        <begin position="468"/>
        <end position="473"/>
    </location>
</feature>
<feature type="strand" evidence="6">
    <location>
        <begin position="476"/>
        <end position="482"/>
    </location>
</feature>
<feature type="helix" evidence="6">
    <location>
        <begin position="491"/>
        <end position="512"/>
    </location>
</feature>
<name>TRPE_SERMA</name>
<dbReference type="EC" id="4.1.3.27"/>
<dbReference type="EMBL" id="AY027546">
    <property type="protein sequence ID" value="AAA57308.2"/>
    <property type="molecule type" value="Genomic_DNA"/>
</dbReference>
<dbReference type="PIR" id="A01117">
    <property type="entry name" value="A01117"/>
</dbReference>
<dbReference type="PDB" id="1I7Q">
    <property type="method" value="X-ray"/>
    <property type="resolution" value="1.95 A"/>
    <property type="chains" value="A/C=1-519"/>
</dbReference>
<dbReference type="PDB" id="1I7S">
    <property type="method" value="X-ray"/>
    <property type="resolution" value="2.40 A"/>
    <property type="chains" value="A/C=1-519"/>
</dbReference>
<dbReference type="PDBsum" id="1I7Q"/>
<dbReference type="PDBsum" id="1I7S"/>
<dbReference type="SMR" id="P00897"/>
<dbReference type="IntAct" id="P00897">
    <property type="interactions" value="1"/>
</dbReference>
<dbReference type="STRING" id="273526.SMDB11_1933"/>
<dbReference type="BRENDA" id="4.1.3.27">
    <property type="organism ID" value="5690"/>
</dbReference>
<dbReference type="UniPathway" id="UPA00035">
    <property type="reaction ID" value="UER00040"/>
</dbReference>
<dbReference type="EvolutionaryTrace" id="P00897"/>
<dbReference type="GO" id="GO:0004049">
    <property type="term" value="F:anthranilate synthase activity"/>
    <property type="evidence" value="ECO:0007669"/>
    <property type="project" value="UniProtKB-EC"/>
</dbReference>
<dbReference type="GO" id="GO:0046872">
    <property type="term" value="F:metal ion binding"/>
    <property type="evidence" value="ECO:0007669"/>
    <property type="project" value="UniProtKB-KW"/>
</dbReference>
<dbReference type="GO" id="GO:0000162">
    <property type="term" value="P:L-tryptophan biosynthetic process"/>
    <property type="evidence" value="ECO:0007669"/>
    <property type="project" value="UniProtKB-UniPathway"/>
</dbReference>
<dbReference type="FunFam" id="3.60.120.10:FF:000006">
    <property type="entry name" value="Anthranilate synthase component 1"/>
    <property type="match status" value="1"/>
</dbReference>
<dbReference type="Gene3D" id="3.60.120.10">
    <property type="entry name" value="Anthranilate synthase"/>
    <property type="match status" value="1"/>
</dbReference>
<dbReference type="InterPro" id="IPR005801">
    <property type="entry name" value="ADC_synthase"/>
</dbReference>
<dbReference type="InterPro" id="IPR019999">
    <property type="entry name" value="Anth_synth_I-like"/>
</dbReference>
<dbReference type="InterPro" id="IPR006805">
    <property type="entry name" value="Anth_synth_I_N"/>
</dbReference>
<dbReference type="InterPro" id="IPR005257">
    <property type="entry name" value="Anth_synth_I_TrpE"/>
</dbReference>
<dbReference type="InterPro" id="IPR015890">
    <property type="entry name" value="Chorismate_C"/>
</dbReference>
<dbReference type="NCBIfam" id="NF010079">
    <property type="entry name" value="PRK13564.1"/>
    <property type="match status" value="1"/>
</dbReference>
<dbReference type="NCBIfam" id="TIGR00565">
    <property type="entry name" value="trpE_proteo"/>
    <property type="match status" value="1"/>
</dbReference>
<dbReference type="PANTHER" id="PTHR11236">
    <property type="entry name" value="AMINOBENZOATE/ANTHRANILATE SYNTHASE"/>
    <property type="match status" value="1"/>
</dbReference>
<dbReference type="PANTHER" id="PTHR11236:SF49">
    <property type="entry name" value="ANTHRANILATE SYNTHASE COMPONENT 1"/>
    <property type="match status" value="1"/>
</dbReference>
<dbReference type="Pfam" id="PF04715">
    <property type="entry name" value="Anth_synt_I_N"/>
    <property type="match status" value="1"/>
</dbReference>
<dbReference type="Pfam" id="PF00425">
    <property type="entry name" value="Chorismate_bind"/>
    <property type="match status" value="1"/>
</dbReference>
<dbReference type="PIRSF" id="PIRSF001373">
    <property type="entry name" value="TrpE"/>
    <property type="match status" value="1"/>
</dbReference>
<dbReference type="PRINTS" id="PR00095">
    <property type="entry name" value="ANTSNTHASEI"/>
</dbReference>
<dbReference type="SUPFAM" id="SSF56322">
    <property type="entry name" value="ADC synthase"/>
    <property type="match status" value="1"/>
</dbReference>
<evidence type="ECO:0000250" key="1"/>
<evidence type="ECO:0000269" key="2">
    <source>
    </source>
</evidence>
<evidence type="ECO:0000305" key="3"/>
<evidence type="ECO:0000305" key="4">
    <source>
    </source>
</evidence>
<evidence type="ECO:0007744" key="5">
    <source>
        <dbReference type="PDB" id="1I7S"/>
    </source>
</evidence>
<evidence type="ECO:0007829" key="6">
    <source>
        <dbReference type="PDB" id="1I7Q"/>
    </source>
</evidence>
<accession>P00897</accession>
<organism>
    <name type="scientific">Serratia marcescens</name>
    <dbReference type="NCBI Taxonomy" id="615"/>
    <lineage>
        <taxon>Bacteria</taxon>
        <taxon>Pseudomonadati</taxon>
        <taxon>Pseudomonadota</taxon>
        <taxon>Gammaproteobacteria</taxon>
        <taxon>Enterobacterales</taxon>
        <taxon>Yersiniaceae</taxon>
        <taxon>Serratia</taxon>
    </lineage>
</organism>
<comment type="function">
    <text evidence="4">Part of a heterotetrameric complex that catalyzes the two-step biosynthesis of anthranilate, an intermediate in the biosynthesis of L-tryptophan. In the first step, the glutamine-binding beta subunit (TrpG) of anthranilate synthase (AS) provides the glutamine amidotransferase activity which generates ammonia as a substrate that, along with chorismate, is used in the second step, catalyzed by the large alpha subunit of AS (TrpE) to produce anthranilate. In the absence of TrpG, TrpE can synthesize anthranilate directly from chorismate and high concentrations of ammonia (Probable).</text>
</comment>
<comment type="catalytic activity">
    <reaction>
        <text>chorismate + L-glutamine = anthranilate + pyruvate + L-glutamate + H(+)</text>
        <dbReference type="Rhea" id="RHEA:21732"/>
        <dbReference type="ChEBI" id="CHEBI:15361"/>
        <dbReference type="ChEBI" id="CHEBI:15378"/>
        <dbReference type="ChEBI" id="CHEBI:16567"/>
        <dbReference type="ChEBI" id="CHEBI:29748"/>
        <dbReference type="ChEBI" id="CHEBI:29985"/>
        <dbReference type="ChEBI" id="CHEBI:58359"/>
        <dbReference type="EC" id="4.1.3.27"/>
    </reaction>
</comment>
<comment type="cofactor">
    <cofactor evidence="2">
        <name>Mg(2+)</name>
        <dbReference type="ChEBI" id="CHEBI:18420"/>
    </cofactor>
    <text evidence="2">Binds 1 Mg(2+) ion per subunit.</text>
</comment>
<comment type="activity regulation">
    <text evidence="1">Feedback inhibited by tryptophan.</text>
</comment>
<comment type="pathway">
    <text>Amino-acid biosynthesis; L-tryptophan biosynthesis; L-tryptophan from chorismate: step 1/5.</text>
</comment>
<comment type="subunit">
    <text evidence="2">Heterotetramer consisting of two non-identical subunits: a beta subunit (TrpG) and a large alpha subunit (TrpE).</text>
</comment>
<comment type="interaction">
    <interactant intactId="EBI-1031345">
        <id>P00897</id>
    </interactant>
    <interactant intactId="EBI-1031352">
        <id>P00900</id>
        <label>trpG</label>
    </interactant>
    <organismsDiffer>false</organismsDiffer>
    <experiments>2</experiments>
</comment>
<comment type="similarity">
    <text evidence="3">Belongs to the anthranilate synthase component I family.</text>
</comment>
<keyword id="KW-0002">3D-structure</keyword>
<keyword id="KW-0028">Amino-acid biosynthesis</keyword>
<keyword id="KW-0057">Aromatic amino acid biosynthesis</keyword>
<keyword id="KW-0903">Direct protein sequencing</keyword>
<keyword id="KW-0456">Lyase</keyword>
<keyword id="KW-0460">Magnesium</keyword>
<keyword id="KW-0479">Metal-binding</keyword>
<keyword id="KW-0822">Tryptophan biosynthesis</keyword>
<proteinExistence type="evidence at protein level"/>
<reference key="1">
    <citation type="journal article" date="2001" name="Proc. Natl. Acad. Sci. U.S.A.">
        <title>The structures of anthranilate synthase of Serratia marcescens crystallized in the presence of (i) its substrates, chorismate and glutamine, and a product, glutamate, and (ii) its end-product inhibitor, L-tryptophan.</title>
        <authorList>
            <person name="Spraggon G."/>
            <person name="Kim C."/>
            <person name="Nguyen-Huu X."/>
            <person name="Yee M.-C."/>
            <person name="Yanofsky C."/>
            <person name="Mills S.E."/>
        </authorList>
    </citation>
    <scope>NUCLEOTIDE SEQUENCE [GENOMIC DNA]</scope>
    <scope>X-RAY CRYSTALLOGRAPHY (1.95 ANGSTROMS) IN COMPLEX WITH SUBSTRATES AND MAGNESIUM ION</scope>
    <scope>FUNCTION</scope>
    <scope>COFACTOR</scope>
    <scope>SUBUNIT</scope>
</reference>
<reference key="2">
    <citation type="journal article" date="1974" name="Biochemistry">
        <title>Separation of anthranilate synthetase components I and II of Escherichia coli, Salmonella typhimurium, and Serratia marcescens and determination of their amino-terminal sequences by automatic Edman degradation.</title>
        <authorList>
            <person name="Li S.-L."/>
            <person name="Hanlon J."/>
            <person name="Yanofsky C."/>
        </authorList>
    </citation>
    <scope>PROTEIN SEQUENCE OF 1-25</scope>
    <source>
        <strain>SM6</strain>
    </source>
</reference>
<reference key="3">
    <citation type="journal article" date="1978" name="Nature">
        <title>The regulatory region of the trp operon of Serratia marcescens.</title>
        <authorList>
            <person name="Miozzari G.F."/>
            <person name="Yanofsky C."/>
        </authorList>
    </citation>
    <scope>NUCLEOTIDE SEQUENCE [GENOMIC DNA] OF 1-33</scope>
</reference>
<reference key="4">
    <citation type="journal article" date="1980" name="J. Mol. Biol.">
        <title>Nucleotide sequences of the trpG regions of Escherichia coli, Shigella dysenteriae, Salmonella typhimurium and Serratia marcescens.</title>
        <authorList>
            <person name="Nichols B.P."/>
            <person name="Miozzari G.F."/>
            <person name="van Cleemput M."/>
            <person name="Bennett G.N."/>
            <person name="Yanofsky C."/>
        </authorList>
    </citation>
    <scope>NUCLEOTIDE SEQUENCE [GENOMIC DNA] OF 494-519</scope>
    <source>
        <strain>SM6</strain>
    </source>
</reference>
<sequence length="519" mass="57658">MNTKPQLTLLKVQASYRGDPTTLFHQLCGARPATLLLESAEINDKQNLQSLLVIDSALPITALGHTVSVQALTANGPALLPVLDEALPPEVRNQARPNGRELTFPAIDAVQDEDARLRSLSVFDALRTLLTLVDSPADEREAVMLGGLFAYDLVAGFENLPAVRQDQRCPDFCFYLAETLLVLDHQRGSARLQASVFSEQASEAQRLQHRLEQLQAELQQPPQPIPHQKLENMQLSCNQSDEEYGAVVSELQEAIRQGEIFQVVPSRRFSLPCPAPLGPYQTLKDNNPSPYMFFMQDDDFTLFGASPESALKYDAGNRQIEIYPIAGTRPRGRRADGSLDLDLDSRIELEMRTDHKELAEHLMLVDLARNDLARICQAGSRYVADLTKVDRYSFVMHLVSRVVGTLRADLDVLHAYQACMNMGTLSGAPKVRAMQLIAALRSTRRGSYGGRVGYFTAHRHLDTCIVIRSAYVEDGHRTVQAGAGVVQDSIRRREADETRNKARAVLRAIATAHHAKEVF</sequence>
<protein>
    <recommendedName>
        <fullName>Anthranilate synthase component 1</fullName>
        <shortName>AS</shortName>
        <shortName>ASI</shortName>
        <ecNumber>4.1.3.27</ecNumber>
    </recommendedName>
</protein>
<gene>
    <name type="primary">trpE</name>
</gene>